<sequence>MYAIIKHSGKQYKVSVGDDLKLDHFEAESKASIEVSEVLAINDKELKVGAPFVAGAKVVLEVINHGKDKKVVIYKKRRRKDSKLKRGFRRQFTRVVVKDIKA</sequence>
<name>RL21_CAMJD</name>
<dbReference type="EMBL" id="CP000768">
    <property type="protein sequence ID" value="ABS44558.1"/>
    <property type="molecule type" value="Genomic_DNA"/>
</dbReference>
<dbReference type="SMR" id="A7H1G8"/>
<dbReference type="KEGG" id="cjd:JJD26997_0098"/>
<dbReference type="HOGENOM" id="CLU_061463_3_1_7"/>
<dbReference type="Proteomes" id="UP000002302">
    <property type="component" value="Chromosome"/>
</dbReference>
<dbReference type="GO" id="GO:0005737">
    <property type="term" value="C:cytoplasm"/>
    <property type="evidence" value="ECO:0007669"/>
    <property type="project" value="UniProtKB-ARBA"/>
</dbReference>
<dbReference type="GO" id="GO:1990904">
    <property type="term" value="C:ribonucleoprotein complex"/>
    <property type="evidence" value="ECO:0007669"/>
    <property type="project" value="UniProtKB-KW"/>
</dbReference>
<dbReference type="GO" id="GO:0005840">
    <property type="term" value="C:ribosome"/>
    <property type="evidence" value="ECO:0007669"/>
    <property type="project" value="UniProtKB-KW"/>
</dbReference>
<dbReference type="GO" id="GO:0019843">
    <property type="term" value="F:rRNA binding"/>
    <property type="evidence" value="ECO:0007669"/>
    <property type="project" value="UniProtKB-UniRule"/>
</dbReference>
<dbReference type="GO" id="GO:0003735">
    <property type="term" value="F:structural constituent of ribosome"/>
    <property type="evidence" value="ECO:0007669"/>
    <property type="project" value="InterPro"/>
</dbReference>
<dbReference type="GO" id="GO:0006412">
    <property type="term" value="P:translation"/>
    <property type="evidence" value="ECO:0007669"/>
    <property type="project" value="UniProtKB-UniRule"/>
</dbReference>
<dbReference type="HAMAP" id="MF_01363">
    <property type="entry name" value="Ribosomal_bL21"/>
    <property type="match status" value="1"/>
</dbReference>
<dbReference type="InterPro" id="IPR028909">
    <property type="entry name" value="bL21-like"/>
</dbReference>
<dbReference type="InterPro" id="IPR036164">
    <property type="entry name" value="bL21-like_sf"/>
</dbReference>
<dbReference type="InterPro" id="IPR001787">
    <property type="entry name" value="Ribosomal_bL21"/>
</dbReference>
<dbReference type="InterPro" id="IPR018258">
    <property type="entry name" value="Ribosomal_bL21_CS"/>
</dbReference>
<dbReference type="NCBIfam" id="TIGR00061">
    <property type="entry name" value="L21"/>
    <property type="match status" value="1"/>
</dbReference>
<dbReference type="PANTHER" id="PTHR21349">
    <property type="entry name" value="50S RIBOSOMAL PROTEIN L21"/>
    <property type="match status" value="1"/>
</dbReference>
<dbReference type="PANTHER" id="PTHR21349:SF0">
    <property type="entry name" value="LARGE RIBOSOMAL SUBUNIT PROTEIN BL21M"/>
    <property type="match status" value="1"/>
</dbReference>
<dbReference type="Pfam" id="PF00829">
    <property type="entry name" value="Ribosomal_L21p"/>
    <property type="match status" value="1"/>
</dbReference>
<dbReference type="SUPFAM" id="SSF141091">
    <property type="entry name" value="L21p-like"/>
    <property type="match status" value="1"/>
</dbReference>
<dbReference type="PROSITE" id="PS01169">
    <property type="entry name" value="RIBOSOMAL_L21"/>
    <property type="match status" value="1"/>
</dbReference>
<proteinExistence type="inferred from homology"/>
<accession>A7H1G8</accession>
<organism>
    <name type="scientific">Campylobacter jejuni subsp. doylei (strain ATCC BAA-1458 / RM4099 / 269.97)</name>
    <dbReference type="NCBI Taxonomy" id="360109"/>
    <lineage>
        <taxon>Bacteria</taxon>
        <taxon>Pseudomonadati</taxon>
        <taxon>Campylobacterota</taxon>
        <taxon>Epsilonproteobacteria</taxon>
        <taxon>Campylobacterales</taxon>
        <taxon>Campylobacteraceae</taxon>
        <taxon>Campylobacter</taxon>
    </lineage>
</organism>
<gene>
    <name evidence="1" type="primary">rplU</name>
    <name type="ordered locus">JJD26997_0098</name>
</gene>
<keyword id="KW-0687">Ribonucleoprotein</keyword>
<keyword id="KW-0689">Ribosomal protein</keyword>
<keyword id="KW-0694">RNA-binding</keyword>
<keyword id="KW-0699">rRNA-binding</keyword>
<feature type="chain" id="PRO_1000067820" description="Large ribosomal subunit protein bL21">
    <location>
        <begin position="1"/>
        <end position="102"/>
    </location>
</feature>
<evidence type="ECO:0000255" key="1">
    <source>
        <dbReference type="HAMAP-Rule" id="MF_01363"/>
    </source>
</evidence>
<evidence type="ECO:0000305" key="2"/>
<protein>
    <recommendedName>
        <fullName evidence="1">Large ribosomal subunit protein bL21</fullName>
    </recommendedName>
    <alternativeName>
        <fullName evidence="2">50S ribosomal protein L21</fullName>
    </alternativeName>
</protein>
<reference key="1">
    <citation type="submission" date="2007-07" db="EMBL/GenBank/DDBJ databases">
        <title>Complete genome sequence of Campylobacter jejuni subsp doylei 269.97 isolated from human blood.</title>
        <authorList>
            <person name="Fouts D.E."/>
            <person name="Mongodin E.F."/>
            <person name="Puiu D."/>
            <person name="Sebastian Y."/>
            <person name="Miller W.G."/>
            <person name="Mandrell R.E."/>
            <person name="Lastovica A.J."/>
            <person name="Nelson K.E."/>
        </authorList>
    </citation>
    <scope>NUCLEOTIDE SEQUENCE [LARGE SCALE GENOMIC DNA]</scope>
    <source>
        <strain>ATCC BAA-1458 / RM4099 / 269.97</strain>
    </source>
</reference>
<comment type="function">
    <text evidence="1">This protein binds to 23S rRNA in the presence of protein L20.</text>
</comment>
<comment type="subunit">
    <text evidence="1">Part of the 50S ribosomal subunit. Contacts protein L20.</text>
</comment>
<comment type="similarity">
    <text evidence="1">Belongs to the bacterial ribosomal protein bL21 family.</text>
</comment>